<dbReference type="EC" id="3.4.21.92" evidence="1"/>
<dbReference type="EMBL" id="AF137379">
    <property type="protein sequence ID" value="AAD54807.1"/>
    <property type="molecule type" value="Genomic_DNA"/>
</dbReference>
<dbReference type="RefSeq" id="NP_050836.1">
    <property type="nucleotide sequence ID" value="NC_000927.1"/>
</dbReference>
<dbReference type="SMR" id="Q9TL09"/>
<dbReference type="MEROPS" id="S14.002"/>
<dbReference type="GeneID" id="801926"/>
<dbReference type="GO" id="GO:0009570">
    <property type="term" value="C:chloroplast stroma"/>
    <property type="evidence" value="ECO:0007669"/>
    <property type="project" value="UniProtKB-SubCell"/>
</dbReference>
<dbReference type="GO" id="GO:0009368">
    <property type="term" value="C:endopeptidase Clp complex"/>
    <property type="evidence" value="ECO:0007669"/>
    <property type="project" value="TreeGrafter"/>
</dbReference>
<dbReference type="GO" id="GO:0004176">
    <property type="term" value="F:ATP-dependent peptidase activity"/>
    <property type="evidence" value="ECO:0007669"/>
    <property type="project" value="InterPro"/>
</dbReference>
<dbReference type="GO" id="GO:0051117">
    <property type="term" value="F:ATPase binding"/>
    <property type="evidence" value="ECO:0007669"/>
    <property type="project" value="TreeGrafter"/>
</dbReference>
<dbReference type="GO" id="GO:0004252">
    <property type="term" value="F:serine-type endopeptidase activity"/>
    <property type="evidence" value="ECO:0007669"/>
    <property type="project" value="UniProtKB-UniRule"/>
</dbReference>
<dbReference type="GO" id="GO:0006515">
    <property type="term" value="P:protein quality control for misfolded or incompletely synthesized proteins"/>
    <property type="evidence" value="ECO:0007669"/>
    <property type="project" value="TreeGrafter"/>
</dbReference>
<dbReference type="CDD" id="cd07017">
    <property type="entry name" value="S14_ClpP_2"/>
    <property type="match status" value="1"/>
</dbReference>
<dbReference type="Gene3D" id="3.90.226.10">
    <property type="entry name" value="2-enoyl-CoA Hydratase, Chain A, domain 1"/>
    <property type="match status" value="1"/>
</dbReference>
<dbReference type="HAMAP" id="MF_00444">
    <property type="entry name" value="ClpP"/>
    <property type="match status" value="1"/>
</dbReference>
<dbReference type="InterPro" id="IPR001907">
    <property type="entry name" value="ClpP"/>
</dbReference>
<dbReference type="InterPro" id="IPR029045">
    <property type="entry name" value="ClpP/crotonase-like_dom_sf"/>
</dbReference>
<dbReference type="InterPro" id="IPR023562">
    <property type="entry name" value="ClpP/TepA"/>
</dbReference>
<dbReference type="InterPro" id="IPR033135">
    <property type="entry name" value="ClpP_His_AS"/>
</dbReference>
<dbReference type="InterPro" id="IPR018215">
    <property type="entry name" value="ClpP_Ser_AS"/>
</dbReference>
<dbReference type="PANTHER" id="PTHR10381">
    <property type="entry name" value="ATP-DEPENDENT CLP PROTEASE PROTEOLYTIC SUBUNIT"/>
    <property type="match status" value="1"/>
</dbReference>
<dbReference type="PANTHER" id="PTHR10381:SF11">
    <property type="entry name" value="ATP-DEPENDENT CLP PROTEASE PROTEOLYTIC SUBUNIT, MITOCHONDRIAL"/>
    <property type="match status" value="1"/>
</dbReference>
<dbReference type="Pfam" id="PF00574">
    <property type="entry name" value="CLP_protease"/>
    <property type="match status" value="1"/>
</dbReference>
<dbReference type="PRINTS" id="PR00127">
    <property type="entry name" value="CLPPROTEASEP"/>
</dbReference>
<dbReference type="SUPFAM" id="SSF52096">
    <property type="entry name" value="ClpP/crotonase"/>
    <property type="match status" value="1"/>
</dbReference>
<dbReference type="PROSITE" id="PS00382">
    <property type="entry name" value="CLP_PROTEASE_HIS"/>
    <property type="match status" value="1"/>
</dbReference>
<dbReference type="PROSITE" id="PS00381">
    <property type="entry name" value="CLP_PROTEASE_SER"/>
    <property type="match status" value="1"/>
</dbReference>
<accession>Q9TL09</accession>
<protein>
    <recommendedName>
        <fullName evidence="1">ATP-dependent Clp protease proteolytic subunit</fullName>
        <ecNumber evidence="1">3.4.21.92</ecNumber>
    </recommendedName>
    <alternativeName>
        <fullName evidence="1">Endopeptidase Clp</fullName>
    </alternativeName>
</protein>
<gene>
    <name evidence="1" type="primary">clpP</name>
</gene>
<proteinExistence type="inferred from homology"/>
<keyword id="KW-0150">Chloroplast</keyword>
<keyword id="KW-0378">Hydrolase</keyword>
<keyword id="KW-0934">Plastid</keyword>
<keyword id="KW-0645">Protease</keyword>
<keyword id="KW-0720">Serine protease</keyword>
<name>CLPP_NEPOL</name>
<organism>
    <name type="scientific">Nephroselmis olivacea</name>
    <name type="common">Green alga</name>
    <dbReference type="NCBI Taxonomy" id="31312"/>
    <lineage>
        <taxon>Eukaryota</taxon>
        <taxon>Viridiplantae</taxon>
        <taxon>Chlorophyta</taxon>
        <taxon>Nephroselmidophyceae</taxon>
        <taxon>Nephroselmidales</taxon>
        <taxon>Nephroselmidaceae</taxon>
        <taxon>Nephroselmis</taxon>
    </lineage>
</organism>
<evidence type="ECO:0000255" key="1">
    <source>
        <dbReference type="HAMAP-Rule" id="MF_00444"/>
    </source>
</evidence>
<comment type="function">
    <text evidence="1">Cleaves peptides in various proteins in a process that requires ATP hydrolysis. Has a chymotrypsin-like activity. Plays a major role in the degradation of misfolded proteins.</text>
</comment>
<comment type="catalytic activity">
    <reaction evidence="1">
        <text>Hydrolysis of proteins to small peptides in the presence of ATP and magnesium. alpha-casein is the usual test substrate. In the absence of ATP, only oligopeptides shorter than five residues are hydrolyzed (such as succinyl-Leu-Tyr-|-NHMec, and Leu-Tyr-Leu-|-Tyr-Trp, in which cleavage of the -Tyr-|-Leu- and -Tyr-|-Trp bonds also occurs).</text>
        <dbReference type="EC" id="3.4.21.92"/>
    </reaction>
</comment>
<comment type="subunit">
    <text>Component of the chloroplastic Clp protease core complex.</text>
</comment>
<comment type="subcellular location">
    <subcellularLocation>
        <location evidence="1">Plastid</location>
        <location evidence="1">Chloroplast stroma</location>
    </subcellularLocation>
</comment>
<comment type="similarity">
    <text evidence="1">Belongs to the peptidase S14 family.</text>
</comment>
<reference key="1">
    <citation type="journal article" date="1999" name="Proc. Natl. Acad. Sci. U.S.A.">
        <title>The complete chloroplast DNA sequence of the green alga Nephroselmis olivacea: insights into the architecture of ancestral chloroplast genomes.</title>
        <authorList>
            <person name="Turmel M."/>
            <person name="Otis C."/>
            <person name="Lemieux C."/>
        </authorList>
    </citation>
    <scope>NUCLEOTIDE SEQUENCE [LARGE SCALE GENOMIC DNA]</scope>
    <source>
        <strain>NIES-484 / S-N-5-8</strain>
    </source>
</reference>
<sequence>MPVGVPKVPYRLPGESAPQWVDLYNRLYRQRLLFMGQELGDELSNQLCGIMIYLFAEDPSIPLFMYINSPGGSVTSGLGVFDIATVMMQDVTTICVGIAASMASLVLSGGSTGQRLALPHARMMIHQPEGGSRGQASDVMYESSEVERLRDIVVDCYVERTHQSRETIIIDLNRDLFMSPRQARSYGLIDAVALPAVKEEYTGFSMFS</sequence>
<feature type="chain" id="PRO_0000179746" description="ATP-dependent Clp protease proteolytic subunit">
    <location>
        <begin position="1"/>
        <end position="208"/>
    </location>
</feature>
<feature type="active site" description="Nucleophile" evidence="1">
    <location>
        <position position="101"/>
    </location>
</feature>
<feature type="active site" evidence="1">
    <location>
        <position position="126"/>
    </location>
</feature>
<geneLocation type="chloroplast"/>